<organism>
    <name type="scientific">Capra hircus</name>
    <name type="common">Goat</name>
    <dbReference type="NCBI Taxonomy" id="9925"/>
    <lineage>
        <taxon>Eukaryota</taxon>
        <taxon>Metazoa</taxon>
        <taxon>Chordata</taxon>
        <taxon>Craniata</taxon>
        <taxon>Vertebrata</taxon>
        <taxon>Euteleostomi</taxon>
        <taxon>Mammalia</taxon>
        <taxon>Eutheria</taxon>
        <taxon>Laurasiatheria</taxon>
        <taxon>Artiodactyla</taxon>
        <taxon>Ruminantia</taxon>
        <taxon>Pecora</taxon>
        <taxon>Bovidae</taxon>
        <taxon>Caprinae</taxon>
        <taxon>Capra</taxon>
    </lineage>
</organism>
<keyword id="KW-0130">Cell adhesion</keyword>
<keyword id="KW-1003">Cell membrane</keyword>
<keyword id="KW-0966">Cell projection</keyword>
<keyword id="KW-0963">Cytoplasm</keyword>
<keyword id="KW-0206">Cytoskeleton</keyword>
<keyword id="KW-1015">Disulfide bond</keyword>
<keyword id="KW-0325">Glycoprotein</keyword>
<keyword id="KW-0339">Growth factor</keyword>
<keyword id="KW-0472">Membrane</keyword>
<keyword id="KW-0873">Pyrrolidone carboxylic acid</keyword>
<keyword id="KW-1185">Reference proteome</keyword>
<keyword id="KW-0964">Secreted</keyword>
<keyword id="KW-0732">Signal</keyword>
<keyword id="KW-0812">Transmembrane</keyword>
<keyword id="KW-1133">Transmembrane helix</keyword>
<evidence type="ECO:0000250" key="1"/>
<evidence type="ECO:0000250" key="2">
    <source>
        <dbReference type="UniProtKB" id="P21581"/>
    </source>
</evidence>
<evidence type="ECO:0000250" key="3">
    <source>
        <dbReference type="UniProtKB" id="P21583"/>
    </source>
</evidence>
<evidence type="ECO:0000255" key="4"/>
<evidence type="ECO:0000305" key="5"/>
<protein>
    <recommendedName>
        <fullName>Kit ligand</fullName>
    </recommendedName>
    <alternativeName>
        <fullName>Mast cell growth factor</fullName>
        <shortName>MGF</shortName>
    </alternativeName>
    <alternativeName>
        <fullName>Stem cell factor</fullName>
        <shortName>SCF</shortName>
    </alternativeName>
    <alternativeName>
        <fullName>c-Kit ligand</fullName>
    </alternativeName>
    <component>
        <recommendedName>
            <fullName>Soluble KIT ligand</fullName>
            <shortName>sKITLG</shortName>
        </recommendedName>
    </component>
    <component>
        <recommendedName>
            <fullName>Processed kit ligand</fullName>
        </recommendedName>
    </component>
</protein>
<dbReference type="EMBL" id="AB002152">
    <property type="protein sequence ID" value="BAB71753.1"/>
    <property type="molecule type" value="mRNA"/>
</dbReference>
<dbReference type="RefSeq" id="NP_001272599.1">
    <property type="nucleotide sequence ID" value="NM_001285670.1"/>
</dbReference>
<dbReference type="SMR" id="Q95M19"/>
<dbReference type="STRING" id="9925.ENSCHIP00000030559"/>
<dbReference type="GlyCosmos" id="Q95M19">
    <property type="glycosylation" value="4 sites, No reported glycans"/>
</dbReference>
<dbReference type="Ensembl" id="ENSCHIT00040000905">
    <property type="protein sequence ID" value="ENSCHIP00040000773"/>
    <property type="gene ID" value="ENSCHIG00040000427"/>
</dbReference>
<dbReference type="GeneID" id="100860807"/>
<dbReference type="KEGG" id="chx:100860807"/>
<dbReference type="CTD" id="4254"/>
<dbReference type="OrthoDB" id="8445223at2759"/>
<dbReference type="Proteomes" id="UP000291000">
    <property type="component" value="Unassembled WGS sequence"/>
</dbReference>
<dbReference type="Proteomes" id="UP000694566">
    <property type="component" value="Unplaced"/>
</dbReference>
<dbReference type="GO" id="GO:0005737">
    <property type="term" value="C:cytoplasm"/>
    <property type="evidence" value="ECO:0000250"/>
    <property type="project" value="UniProtKB"/>
</dbReference>
<dbReference type="GO" id="GO:0005856">
    <property type="term" value="C:cytoskeleton"/>
    <property type="evidence" value="ECO:0007669"/>
    <property type="project" value="UniProtKB-SubCell"/>
</dbReference>
<dbReference type="GO" id="GO:0005576">
    <property type="term" value="C:extracellular region"/>
    <property type="evidence" value="ECO:0007669"/>
    <property type="project" value="UniProtKB-SubCell"/>
</dbReference>
<dbReference type="GO" id="GO:0030175">
    <property type="term" value="C:filopodium"/>
    <property type="evidence" value="ECO:0000250"/>
    <property type="project" value="UniProtKB"/>
</dbReference>
<dbReference type="GO" id="GO:0030027">
    <property type="term" value="C:lamellipodium"/>
    <property type="evidence" value="ECO:0000250"/>
    <property type="project" value="UniProtKB"/>
</dbReference>
<dbReference type="GO" id="GO:0005886">
    <property type="term" value="C:plasma membrane"/>
    <property type="evidence" value="ECO:0000250"/>
    <property type="project" value="UniProtKB"/>
</dbReference>
<dbReference type="GO" id="GO:0005125">
    <property type="term" value="F:cytokine activity"/>
    <property type="evidence" value="ECO:0007669"/>
    <property type="project" value="TreeGrafter"/>
</dbReference>
<dbReference type="GO" id="GO:0008083">
    <property type="term" value="F:growth factor activity"/>
    <property type="evidence" value="ECO:0007669"/>
    <property type="project" value="UniProtKB-KW"/>
</dbReference>
<dbReference type="GO" id="GO:0005173">
    <property type="term" value="F:stem cell factor receptor binding"/>
    <property type="evidence" value="ECO:0007669"/>
    <property type="project" value="InterPro"/>
</dbReference>
<dbReference type="GO" id="GO:0007155">
    <property type="term" value="P:cell adhesion"/>
    <property type="evidence" value="ECO:0007669"/>
    <property type="project" value="UniProtKB-KW"/>
</dbReference>
<dbReference type="GO" id="GO:0008284">
    <property type="term" value="P:positive regulation of cell population proliferation"/>
    <property type="evidence" value="ECO:0007669"/>
    <property type="project" value="TreeGrafter"/>
</dbReference>
<dbReference type="FunFam" id="1.20.1250.10:FF:000004">
    <property type="entry name" value="Kit ligand"/>
    <property type="match status" value="1"/>
</dbReference>
<dbReference type="Gene3D" id="1.20.1250.10">
    <property type="match status" value="1"/>
</dbReference>
<dbReference type="InterPro" id="IPR009079">
    <property type="entry name" value="4_helix_cytokine-like_core"/>
</dbReference>
<dbReference type="InterPro" id="IPR003452">
    <property type="entry name" value="SCF"/>
</dbReference>
<dbReference type="PANTHER" id="PTHR11574">
    <property type="entry name" value="KIT LIGAND"/>
    <property type="match status" value="1"/>
</dbReference>
<dbReference type="PANTHER" id="PTHR11574:SF0">
    <property type="entry name" value="KIT LIGAND"/>
    <property type="match status" value="1"/>
</dbReference>
<dbReference type="Pfam" id="PF02404">
    <property type="entry name" value="SCF"/>
    <property type="match status" value="1"/>
</dbReference>
<dbReference type="PIRSF" id="PIRSF015599">
    <property type="entry name" value="SCF"/>
    <property type="match status" value="1"/>
</dbReference>
<dbReference type="SUPFAM" id="SSF47266">
    <property type="entry name" value="4-helical cytokines"/>
    <property type="match status" value="1"/>
</dbReference>
<proteinExistence type="evidence at transcript level"/>
<accession>Q95M19</accession>
<name>SCF_CAPHI</name>
<sequence>MKKTQTWIITCIYLQLLLFNPLVHSQGICRNRVTDDVKDVTKLVANLPKDYMITLKYVPGMDVLPSHCWISEMVEQLSVSLTDLLDKFSNISEGLSNYSIIDKLVKIVDDLVECMEEHSFENVKKSSKSPEPRQFTPEKFFGIFNKSIDAFKDLEIVASTMSECVISSTSSPEKDSRVSVTKPFMLPPVAASSLRNDSSSSNRKASNSIEDSSLQWAAVALPAFFSLVIGFAFGALYWKKKQPNLTRTVENRQINEEDNEISMLQEKEREFQEV</sequence>
<feature type="signal peptide" evidence="4">
    <location>
        <begin position="1"/>
        <end position="25"/>
    </location>
</feature>
<feature type="chain" id="PRO_0000031910" description="Kit ligand">
    <location>
        <begin position="26"/>
        <end position="274"/>
    </location>
</feature>
<feature type="chain" id="PRO_0000403388" description="Soluble KIT ligand" evidence="1">
    <location>
        <begin position="26"/>
        <end position="191"/>
    </location>
</feature>
<feature type="chain" id="PRO_0000292274" description="Processed kit ligand">
    <location>
        <begin position="26"/>
        <end status="unknown"/>
    </location>
</feature>
<feature type="topological domain" description="Extracellular" evidence="4">
    <location>
        <begin position="26"/>
        <end position="215"/>
    </location>
</feature>
<feature type="transmembrane region" description="Helical" evidence="4">
    <location>
        <begin position="216"/>
        <end position="238"/>
    </location>
</feature>
<feature type="topological domain" description="Cytoplasmic" evidence="4">
    <location>
        <begin position="239"/>
        <end position="274"/>
    </location>
</feature>
<feature type="modified residue" description="Pyrrolidone carboxylic acid" evidence="2">
    <location>
        <position position="26"/>
    </location>
</feature>
<feature type="glycosylation site" description="N-linked (GlcNAc...) asparagine" evidence="4">
    <location>
        <position position="90"/>
    </location>
</feature>
<feature type="glycosylation site" description="N-linked (GlcNAc...) asparagine" evidence="4">
    <location>
        <position position="97"/>
    </location>
</feature>
<feature type="glycosylation site" description="N-linked (GlcNAc...) asparagine" evidence="4">
    <location>
        <position position="145"/>
    </location>
</feature>
<feature type="glycosylation site" description="N-linked (GlcNAc...) asparagine" evidence="4">
    <location>
        <position position="196"/>
    </location>
</feature>
<feature type="disulfide bond" evidence="1">
    <location>
        <begin position="29"/>
        <end position="114"/>
    </location>
</feature>
<feature type="disulfide bond" evidence="1">
    <location>
        <begin position="68"/>
        <end position="164"/>
    </location>
</feature>
<reference key="1">
    <citation type="submission" date="1997-03" db="EMBL/GenBank/DDBJ databases">
        <title>Identification of splicing isoforms of caprine stem cell factor (gSCF) transcripts and expression patterns of the two major isoforms, gSCF825 and gSCF741, in the brain and the skin of adult and fetal Shiba goats, Capra hircus.</title>
        <authorList>
            <person name="Yanagisawa N."/>
            <person name="Tanaka S."/>
            <person name="Yamanouchi K."/>
            <person name="Tojo H."/>
            <person name="Tachi C."/>
        </authorList>
    </citation>
    <scope>NUCLEOTIDE SEQUENCE [MRNA]</scope>
    <source>
        <strain>Shiba</strain>
        <tissue>Brain</tissue>
    </source>
</reference>
<gene>
    <name type="primary">KITLG</name>
    <name type="synonym">SCF</name>
</gene>
<comment type="function">
    <text evidence="1">Stimulates the proliferation of mast cells. Able to augment the proliferation of both myeloid and lymphoid hematopoietic progenitors in bone marrow culture. Also mediates cell-cell adhesion. Acts synergistically with other cytokines, probably interleukins (By similarity).</text>
</comment>
<comment type="subunit">
    <text evidence="5">Homodimer, non-covalently linked.</text>
</comment>
<comment type="subcellular location">
    <subcellularLocation>
        <location evidence="3">Cytoplasm</location>
    </subcellularLocation>
    <subcellularLocation>
        <location evidence="1">Cytoplasm</location>
        <location evidence="1">Cytoskeleton</location>
    </subcellularLocation>
    <subcellularLocation>
        <location evidence="3">Cell membrane</location>
        <topology evidence="1">Single-pass type I membrane protein</topology>
    </subcellularLocation>
    <subcellularLocation>
        <location evidence="3">Cell projection</location>
        <location evidence="3">Lamellipodium</location>
    </subcellularLocation>
    <subcellularLocation>
        <location evidence="3">Cell projection</location>
        <location evidence="3">Filopodium</location>
    </subcellularLocation>
</comment>
<comment type="subcellular location">
    <molecule>Processed kit ligand</molecule>
    <subcellularLocation>
        <location evidence="1">Secreted</location>
    </subcellularLocation>
</comment>
<comment type="subcellular location">
    <molecule>Soluble KIT ligand</molecule>
    <subcellularLocation>
        <location evidence="1">Secreted</location>
    </subcellularLocation>
</comment>
<comment type="PTM">
    <text evidence="1">A soluble form is produced by proteolytic processing of the extracellular domain.</text>
</comment>
<comment type="similarity">
    <text evidence="5">Belongs to the SCF family.</text>
</comment>